<comment type="function">
    <text evidence="1">Involved in the degradation of chitin. ChbG is essential for growth on the acetylated chitooligosaccharides chitobiose and chitotriose but is dispensable for growth on cellobiose and chitosan dimer, the deacetylated form of chitobiose. Deacetylation of chitobiose-6-P and chitotriose-6-P is necessary for both the activation of the chb promoter by the regulatory protein ChbR and the hydrolysis of phosphorylated beta-glucosides by the phospho-beta-glucosidase ChbF. Catalyzes the removal of only one acetyl group from chitobiose-6-P to yield monoacetylchitobiose-6-P, the inducer of ChbR and the substrate of ChbF.</text>
</comment>
<comment type="catalytic activity">
    <reaction evidence="1">
        <text>N,N'-diacetylchitobiose + H2O = N-acetyl-beta-D-glucosaminyl-(1-&gt;4)-D-glucosamine + acetate</text>
        <dbReference type="Rhea" id="RHEA:27469"/>
        <dbReference type="ChEBI" id="CHEBI:15377"/>
        <dbReference type="ChEBI" id="CHEBI:28681"/>
        <dbReference type="ChEBI" id="CHEBI:30089"/>
        <dbReference type="ChEBI" id="CHEBI:59910"/>
        <dbReference type="EC" id="3.5.1.105"/>
    </reaction>
</comment>
<comment type="catalytic activity">
    <reaction evidence="1">
        <text>diacetylchitobiose-6'-phosphate + H2O = N'-monoacetylchitobiose-6'-phosphate + acetate</text>
        <dbReference type="Rhea" id="RHEA:35083"/>
        <dbReference type="ChEBI" id="CHEBI:15377"/>
        <dbReference type="ChEBI" id="CHEBI:30089"/>
        <dbReference type="ChEBI" id="CHEBI:64883"/>
        <dbReference type="ChEBI" id="CHEBI:71315"/>
    </reaction>
</comment>
<comment type="cofactor">
    <cofactor evidence="1">
        <name>Mg(2+)</name>
        <dbReference type="ChEBI" id="CHEBI:18420"/>
    </cofactor>
</comment>
<comment type="pathway">
    <text evidence="1">Glycan degradation; chitin degradation.</text>
</comment>
<comment type="subunit">
    <text evidence="1">Homodimer.</text>
</comment>
<comment type="subcellular location">
    <subcellularLocation>
        <location evidence="1">Cytoplasm</location>
    </subcellularLocation>
</comment>
<comment type="similarity">
    <text evidence="1">Belongs to the YdjC deacetylase family. ChbG subfamily.</text>
</comment>
<name>CHBG_SALTY</name>
<proteinExistence type="inferred from homology"/>
<accession>Q8ZPU1</accession>
<evidence type="ECO:0000255" key="1">
    <source>
        <dbReference type="HAMAP-Rule" id="MF_01246"/>
    </source>
</evidence>
<protein>
    <recommendedName>
        <fullName evidence="1">Chitooligosaccharide deacetylase</fullName>
        <shortName evidence="1">COD</shortName>
        <ecNumber evidence="1">3.5.1.105</ecNumber>
    </recommendedName>
    <alternativeName>
        <fullName evidence="1">Chitin disaccharide deacetylase</fullName>
    </alternativeName>
    <alternativeName>
        <fullName evidence="1">Chitobiose deacetylase</fullName>
    </alternativeName>
    <alternativeName>
        <fullName evidence="1">Chitobiose-6P deacetylase</fullName>
    </alternativeName>
    <alternativeName>
        <fullName evidence="1">Chitotriose deacetylase</fullName>
    </alternativeName>
    <alternativeName>
        <fullName evidence="1">Chitotriose-6P deacetylase</fullName>
    </alternativeName>
</protein>
<keyword id="KW-0119">Carbohydrate metabolism</keyword>
<keyword id="KW-0146">Chitin degradation</keyword>
<keyword id="KW-0963">Cytoplasm</keyword>
<keyword id="KW-0378">Hydrolase</keyword>
<keyword id="KW-0460">Magnesium</keyword>
<keyword id="KW-0479">Metal-binding</keyword>
<keyword id="KW-0624">Polysaccharide degradation</keyword>
<keyword id="KW-1185">Reference proteome</keyword>
<reference key="1">
    <citation type="journal article" date="2001" name="Nature">
        <title>Complete genome sequence of Salmonella enterica serovar Typhimurium LT2.</title>
        <authorList>
            <person name="McClelland M."/>
            <person name="Sanderson K.E."/>
            <person name="Spieth J."/>
            <person name="Clifton S.W."/>
            <person name="Latreille P."/>
            <person name="Courtney L."/>
            <person name="Porwollik S."/>
            <person name="Ali J."/>
            <person name="Dante M."/>
            <person name="Du F."/>
            <person name="Hou S."/>
            <person name="Layman D."/>
            <person name="Leonard S."/>
            <person name="Nguyen C."/>
            <person name="Scott K."/>
            <person name="Holmes A."/>
            <person name="Grewal N."/>
            <person name="Mulvaney E."/>
            <person name="Ryan E."/>
            <person name="Sun H."/>
            <person name="Florea L."/>
            <person name="Miller W."/>
            <person name="Stoneking T."/>
            <person name="Nhan M."/>
            <person name="Waterston R."/>
            <person name="Wilson R.K."/>
        </authorList>
    </citation>
    <scope>NUCLEOTIDE SEQUENCE [LARGE SCALE GENOMIC DNA]</scope>
    <source>
        <strain>LT2 / SGSC1412 / ATCC 700720</strain>
    </source>
</reference>
<feature type="chain" id="PRO_0000051599" description="Chitooligosaccharide deacetylase">
    <location>
        <begin position="1"/>
        <end position="252"/>
    </location>
</feature>
<feature type="binding site" evidence="1">
    <location>
        <position position="61"/>
    </location>
    <ligand>
        <name>Mg(2+)</name>
        <dbReference type="ChEBI" id="CHEBI:18420"/>
    </ligand>
</feature>
<feature type="binding site" evidence="1">
    <location>
        <position position="125"/>
    </location>
    <ligand>
        <name>Mg(2+)</name>
        <dbReference type="ChEBI" id="CHEBI:18420"/>
    </ligand>
</feature>
<dbReference type="EC" id="3.5.1.105" evidence="1"/>
<dbReference type="EMBL" id="AE006468">
    <property type="protein sequence ID" value="AAL20242.1"/>
    <property type="molecule type" value="Genomic_DNA"/>
</dbReference>
<dbReference type="RefSeq" id="WP_000442738.1">
    <property type="nucleotide sequence ID" value="NC_003197.2"/>
</dbReference>
<dbReference type="SMR" id="Q8ZPU1"/>
<dbReference type="STRING" id="99287.STM1317"/>
<dbReference type="PaxDb" id="99287-STM1317"/>
<dbReference type="DNASU" id="1252835"/>
<dbReference type="KEGG" id="stm:STM1317"/>
<dbReference type="PATRIC" id="fig|99287.12.peg.1400"/>
<dbReference type="HOGENOM" id="CLU_064244_4_1_6"/>
<dbReference type="OMA" id="DHIDSHH"/>
<dbReference type="PhylomeDB" id="Q8ZPU1"/>
<dbReference type="BioCyc" id="SENT99287:STM1317-MONOMER"/>
<dbReference type="UniPathway" id="UPA00349"/>
<dbReference type="Proteomes" id="UP000001014">
    <property type="component" value="Chromosome"/>
</dbReference>
<dbReference type="GO" id="GO:0005737">
    <property type="term" value="C:cytoplasm"/>
    <property type="evidence" value="ECO:0007669"/>
    <property type="project" value="UniProtKB-SubCell"/>
</dbReference>
<dbReference type="GO" id="GO:0036311">
    <property type="term" value="F:chitin disaccharide deacetylase activity"/>
    <property type="evidence" value="ECO:0007669"/>
    <property type="project" value="UniProtKB-UniRule"/>
</dbReference>
<dbReference type="GO" id="GO:0019213">
    <property type="term" value="F:deacetylase activity"/>
    <property type="evidence" value="ECO:0000318"/>
    <property type="project" value="GO_Central"/>
</dbReference>
<dbReference type="GO" id="GO:0046872">
    <property type="term" value="F:metal ion binding"/>
    <property type="evidence" value="ECO:0007669"/>
    <property type="project" value="UniProtKB-KW"/>
</dbReference>
<dbReference type="GO" id="GO:0006032">
    <property type="term" value="P:chitin catabolic process"/>
    <property type="evidence" value="ECO:0007669"/>
    <property type="project" value="UniProtKB-UniPathway"/>
</dbReference>
<dbReference type="GO" id="GO:0052777">
    <property type="term" value="P:diacetylchitobiose catabolic process"/>
    <property type="evidence" value="ECO:0000318"/>
    <property type="project" value="GO_Central"/>
</dbReference>
<dbReference type="GO" id="GO:0000272">
    <property type="term" value="P:polysaccharide catabolic process"/>
    <property type="evidence" value="ECO:0007669"/>
    <property type="project" value="UniProtKB-UniRule"/>
</dbReference>
<dbReference type="CDD" id="cd10803">
    <property type="entry name" value="YdjC_EF3048_like"/>
    <property type="match status" value="1"/>
</dbReference>
<dbReference type="FunFam" id="3.20.20.370:FF:000001">
    <property type="entry name" value="Chitooligosaccharide deacetylase"/>
    <property type="match status" value="1"/>
</dbReference>
<dbReference type="Gene3D" id="3.20.20.370">
    <property type="entry name" value="Glycoside hydrolase/deacetylase"/>
    <property type="match status" value="1"/>
</dbReference>
<dbReference type="HAMAP" id="MF_01246">
    <property type="entry name" value="COD"/>
    <property type="match status" value="1"/>
</dbReference>
<dbReference type="InterPro" id="IPR022948">
    <property type="entry name" value="COD_ChbG_bac"/>
</dbReference>
<dbReference type="InterPro" id="IPR011330">
    <property type="entry name" value="Glyco_hydro/deAcase_b/a-brl"/>
</dbReference>
<dbReference type="InterPro" id="IPR006879">
    <property type="entry name" value="YdjC-like"/>
</dbReference>
<dbReference type="NCBIfam" id="NF002559">
    <property type="entry name" value="PRK02134.1"/>
    <property type="match status" value="1"/>
</dbReference>
<dbReference type="PANTHER" id="PTHR31609:SF1">
    <property type="entry name" value="CARBOHYDRATE DEACETYLASE"/>
    <property type="match status" value="1"/>
</dbReference>
<dbReference type="PANTHER" id="PTHR31609">
    <property type="entry name" value="YDJC DEACETYLASE FAMILY MEMBER"/>
    <property type="match status" value="1"/>
</dbReference>
<dbReference type="Pfam" id="PF04794">
    <property type="entry name" value="YdjC"/>
    <property type="match status" value="1"/>
</dbReference>
<dbReference type="SUPFAM" id="SSF88713">
    <property type="entry name" value="Glycoside hydrolase/deacetylase"/>
    <property type="match status" value="1"/>
</dbReference>
<organism>
    <name type="scientific">Salmonella typhimurium (strain LT2 / SGSC1412 / ATCC 700720)</name>
    <dbReference type="NCBI Taxonomy" id="99287"/>
    <lineage>
        <taxon>Bacteria</taxon>
        <taxon>Pseudomonadati</taxon>
        <taxon>Pseudomonadota</taxon>
        <taxon>Gammaproteobacteria</taxon>
        <taxon>Enterobacterales</taxon>
        <taxon>Enterobacteriaceae</taxon>
        <taxon>Salmonella</taxon>
    </lineage>
</organism>
<gene>
    <name evidence="1" type="primary">chbG</name>
    <name type="ordered locus">STM1317</name>
</gene>
<sequence length="252" mass="27958">MERVLIVNADDFGLSKGQNYGIVEAYRNGVVTSTTALVNGEAIDHAAQLSRELPALGVGMHFVLTLGKPVSEMPGLTRDGLLGKWIWQMAEEDTLPLDEIAHELACQYQRFIDVFGSEPTHLDSHHHVHMFPQIFPIVARFAAQRGIALRIDRQTVLNADDLPSDLRSTQGFSSEFYGEEITEACFLRILDASAHRGEASLEVMCHPAFVDNIIRQSAYCYPRLTELEVLTSASLKAAIAERGYRPGSFLDI</sequence>